<feature type="chain" id="PRO_0000294645" description="ATP-dependent RNA helicase SUB2">
    <location>
        <begin position="1"/>
        <end position="433"/>
    </location>
</feature>
<feature type="domain" description="Helicase ATP-binding" evidence="2">
    <location>
        <begin position="80"/>
        <end position="255"/>
    </location>
</feature>
<feature type="domain" description="Helicase C-terminal" evidence="3">
    <location>
        <begin position="267"/>
        <end position="428"/>
    </location>
</feature>
<feature type="region of interest" description="Disordered" evidence="4">
    <location>
        <begin position="1"/>
        <end position="39"/>
    </location>
</feature>
<feature type="short sequence motif" description="Q motif">
    <location>
        <begin position="49"/>
        <end position="77"/>
    </location>
</feature>
<feature type="short sequence motif" description="DEAD box">
    <location>
        <begin position="202"/>
        <end position="205"/>
    </location>
</feature>
<feature type="compositionally biased region" description="Acidic residues" evidence="4">
    <location>
        <begin position="1"/>
        <end position="17"/>
    </location>
</feature>
<feature type="binding site" evidence="2">
    <location>
        <begin position="93"/>
        <end position="100"/>
    </location>
    <ligand>
        <name>ATP</name>
        <dbReference type="ChEBI" id="CHEBI:30616"/>
    </ligand>
</feature>
<sequence length="433" mass="49047">MSAENQEELLDYSDSEEIAVPTTTQAGEGESANDKEADKKGSYVGIHATGFRDFLLKPELLRAIGDCGFEHPSEVQQVCIPQSILGTDVLCQAKSGLGKTAVFVLSTLQQLDPVAGEISTLVICHTRELAYQIRNEYARFSKYMPDVKTEVFYGGTPVKRDIEKLKNKDTCPHIVVATPGRLHALVQEKAIRLNNVKSFVIDECDKVLESLDMRRDVQDIFRATPHQKQVMMFSATLSQDIRPVCKKFMQNPLEIYVDDEAKLTLHGLQQYYIKLEEKEKNRKLSDLLDSLEFNQVIIFVKSTQRANELNKLLCACNFPSIAVHSGLPQEERIERYKSFKEFNKRICVSTDVFGRGIDIERINLAINYDLPNEADQYLHRVGRAGRFGTKGLGISFVSTKEDEEVLEKIQSRFDVKITEFPEEGVDPSTYMNT</sequence>
<protein>
    <recommendedName>
        <fullName>ATP-dependent RNA helicase SUB2</fullName>
        <ecNumber>3.6.4.13</ecNumber>
    </recommendedName>
</protein>
<comment type="function">
    <text evidence="1">ATP-binding RNA helicase involved in transcription elongation and required for the export of mRNA out of the nucleus. SUB2 also plays a role in pre-mRNA splicing and spliceosome assembly. May be involved in rDNA and telomeric silencing, and maintenance of genome integrity (By similarity).</text>
</comment>
<comment type="catalytic activity">
    <reaction>
        <text>ATP + H2O = ADP + phosphate + H(+)</text>
        <dbReference type="Rhea" id="RHEA:13065"/>
        <dbReference type="ChEBI" id="CHEBI:15377"/>
        <dbReference type="ChEBI" id="CHEBI:15378"/>
        <dbReference type="ChEBI" id="CHEBI:30616"/>
        <dbReference type="ChEBI" id="CHEBI:43474"/>
        <dbReference type="ChEBI" id="CHEBI:456216"/>
        <dbReference type="EC" id="3.6.4.13"/>
    </reaction>
</comment>
<comment type="subcellular location">
    <subcellularLocation>
        <location evidence="1">Nucleus</location>
    </subcellularLocation>
</comment>
<comment type="domain">
    <text>The Q motif is unique to and characteristic of the DEAD box family of RNA helicases and controls ATP binding and hydrolysis.</text>
</comment>
<comment type="similarity">
    <text evidence="5">Belongs to the DEAD box helicase family. DECD subfamily.</text>
</comment>
<proteinExistence type="inferred from homology"/>
<evidence type="ECO:0000250" key="1"/>
<evidence type="ECO:0000255" key="2">
    <source>
        <dbReference type="PROSITE-ProRule" id="PRU00541"/>
    </source>
</evidence>
<evidence type="ECO:0000255" key="3">
    <source>
        <dbReference type="PROSITE-ProRule" id="PRU00542"/>
    </source>
</evidence>
<evidence type="ECO:0000256" key="4">
    <source>
        <dbReference type="SAM" id="MobiDB-lite"/>
    </source>
</evidence>
<evidence type="ECO:0000305" key="5"/>
<accession>A5E3W5</accession>
<dbReference type="EC" id="3.6.4.13"/>
<dbReference type="EMBL" id="CH981529">
    <property type="protein sequence ID" value="EDK46123.1"/>
    <property type="molecule type" value="Genomic_DNA"/>
</dbReference>
<dbReference type="RefSeq" id="XP_001524332.1">
    <property type="nucleotide sequence ID" value="XM_001524282.1"/>
</dbReference>
<dbReference type="SMR" id="A5E3W5"/>
<dbReference type="FunCoup" id="A5E3W5">
    <property type="interactions" value="1222"/>
</dbReference>
<dbReference type="STRING" id="379508.A5E3W5"/>
<dbReference type="GeneID" id="5231565"/>
<dbReference type="KEGG" id="lel:PVL30_004027"/>
<dbReference type="VEuPathDB" id="FungiDB:LELG_04303"/>
<dbReference type="eggNOG" id="KOG0329">
    <property type="taxonomic scope" value="Eukaryota"/>
</dbReference>
<dbReference type="HOGENOM" id="CLU_003041_1_0_1"/>
<dbReference type="InParanoid" id="A5E3W5"/>
<dbReference type="OMA" id="YAHVEPK"/>
<dbReference type="OrthoDB" id="10265785at2759"/>
<dbReference type="Proteomes" id="UP000001996">
    <property type="component" value="Unassembled WGS sequence"/>
</dbReference>
<dbReference type="GO" id="GO:0000781">
    <property type="term" value="C:chromosome, telomeric region"/>
    <property type="evidence" value="ECO:0007669"/>
    <property type="project" value="EnsemblFungi"/>
</dbReference>
<dbReference type="GO" id="GO:0005681">
    <property type="term" value="C:spliceosomal complex"/>
    <property type="evidence" value="ECO:0007669"/>
    <property type="project" value="UniProtKB-KW"/>
</dbReference>
<dbReference type="GO" id="GO:0000346">
    <property type="term" value="C:transcription export complex"/>
    <property type="evidence" value="ECO:0007669"/>
    <property type="project" value="EnsemblFungi"/>
</dbReference>
<dbReference type="GO" id="GO:0005524">
    <property type="term" value="F:ATP binding"/>
    <property type="evidence" value="ECO:0007669"/>
    <property type="project" value="UniProtKB-KW"/>
</dbReference>
<dbReference type="GO" id="GO:0016887">
    <property type="term" value="F:ATP hydrolysis activity"/>
    <property type="evidence" value="ECO:0007669"/>
    <property type="project" value="RHEA"/>
</dbReference>
<dbReference type="GO" id="GO:0003723">
    <property type="term" value="F:RNA binding"/>
    <property type="evidence" value="ECO:0007669"/>
    <property type="project" value="UniProtKB-KW"/>
</dbReference>
<dbReference type="GO" id="GO:0003724">
    <property type="term" value="F:RNA helicase activity"/>
    <property type="evidence" value="ECO:0007669"/>
    <property type="project" value="UniProtKB-EC"/>
</dbReference>
<dbReference type="GO" id="GO:0031124">
    <property type="term" value="P:mRNA 3'-end processing"/>
    <property type="evidence" value="ECO:0007669"/>
    <property type="project" value="EnsemblFungi"/>
</dbReference>
<dbReference type="GO" id="GO:0006406">
    <property type="term" value="P:mRNA export from nucleus"/>
    <property type="evidence" value="ECO:0007669"/>
    <property type="project" value="EnsemblFungi"/>
</dbReference>
<dbReference type="GO" id="GO:0000398">
    <property type="term" value="P:mRNA splicing, via spliceosome"/>
    <property type="evidence" value="ECO:0007669"/>
    <property type="project" value="EnsemblFungi"/>
</dbReference>
<dbReference type="GO" id="GO:0031509">
    <property type="term" value="P:subtelomeric heterochromatin formation"/>
    <property type="evidence" value="ECO:0007669"/>
    <property type="project" value="EnsemblFungi"/>
</dbReference>
<dbReference type="GO" id="GO:0006368">
    <property type="term" value="P:transcription elongation by RNA polymerase II"/>
    <property type="evidence" value="ECO:0007669"/>
    <property type="project" value="EnsemblFungi"/>
</dbReference>
<dbReference type="GO" id="GO:0006283">
    <property type="term" value="P:transcription-coupled nucleotide-excision repair"/>
    <property type="evidence" value="ECO:0007669"/>
    <property type="project" value="EnsemblFungi"/>
</dbReference>
<dbReference type="CDD" id="cd17950">
    <property type="entry name" value="DEADc_DDX39"/>
    <property type="match status" value="1"/>
</dbReference>
<dbReference type="CDD" id="cd18787">
    <property type="entry name" value="SF2_C_DEAD"/>
    <property type="match status" value="1"/>
</dbReference>
<dbReference type="FunFam" id="3.40.50.300:FF:000809">
    <property type="entry name" value="ATP-dependent RNA helicase SUB2"/>
    <property type="match status" value="1"/>
</dbReference>
<dbReference type="FunFam" id="3.40.50.300:FF:000111">
    <property type="entry name" value="DEAD-box ATP-dependent RNA helicase"/>
    <property type="match status" value="1"/>
</dbReference>
<dbReference type="Gene3D" id="3.40.50.300">
    <property type="entry name" value="P-loop containing nucleotide triphosphate hydrolases"/>
    <property type="match status" value="2"/>
</dbReference>
<dbReference type="InterPro" id="IPR011545">
    <property type="entry name" value="DEAD/DEAH_box_helicase_dom"/>
</dbReference>
<dbReference type="InterPro" id="IPR014001">
    <property type="entry name" value="Helicase_ATP-bd"/>
</dbReference>
<dbReference type="InterPro" id="IPR001650">
    <property type="entry name" value="Helicase_C-like"/>
</dbReference>
<dbReference type="InterPro" id="IPR027417">
    <property type="entry name" value="P-loop_NTPase"/>
</dbReference>
<dbReference type="InterPro" id="IPR014014">
    <property type="entry name" value="RNA_helicase_DEAD_Q_motif"/>
</dbReference>
<dbReference type="PANTHER" id="PTHR47958">
    <property type="entry name" value="ATP-DEPENDENT RNA HELICASE DBP3"/>
    <property type="match status" value="1"/>
</dbReference>
<dbReference type="Pfam" id="PF00270">
    <property type="entry name" value="DEAD"/>
    <property type="match status" value="1"/>
</dbReference>
<dbReference type="Pfam" id="PF00271">
    <property type="entry name" value="Helicase_C"/>
    <property type="match status" value="1"/>
</dbReference>
<dbReference type="SMART" id="SM00487">
    <property type="entry name" value="DEXDc"/>
    <property type="match status" value="1"/>
</dbReference>
<dbReference type="SMART" id="SM00490">
    <property type="entry name" value="HELICc"/>
    <property type="match status" value="1"/>
</dbReference>
<dbReference type="SUPFAM" id="SSF52540">
    <property type="entry name" value="P-loop containing nucleoside triphosphate hydrolases"/>
    <property type="match status" value="1"/>
</dbReference>
<dbReference type="PROSITE" id="PS51192">
    <property type="entry name" value="HELICASE_ATP_BIND_1"/>
    <property type="match status" value="1"/>
</dbReference>
<dbReference type="PROSITE" id="PS51194">
    <property type="entry name" value="HELICASE_CTER"/>
    <property type="match status" value="1"/>
</dbReference>
<dbReference type="PROSITE" id="PS51195">
    <property type="entry name" value="Q_MOTIF"/>
    <property type="match status" value="1"/>
</dbReference>
<gene>
    <name type="primary">SUB2</name>
    <name type="ORF">LELG_04303</name>
</gene>
<reference key="1">
    <citation type="journal article" date="2009" name="Nature">
        <title>Evolution of pathogenicity and sexual reproduction in eight Candida genomes.</title>
        <authorList>
            <person name="Butler G."/>
            <person name="Rasmussen M.D."/>
            <person name="Lin M.F."/>
            <person name="Santos M.A.S."/>
            <person name="Sakthikumar S."/>
            <person name="Munro C.A."/>
            <person name="Rheinbay E."/>
            <person name="Grabherr M."/>
            <person name="Forche A."/>
            <person name="Reedy J.L."/>
            <person name="Agrafioti I."/>
            <person name="Arnaud M.B."/>
            <person name="Bates S."/>
            <person name="Brown A.J.P."/>
            <person name="Brunke S."/>
            <person name="Costanzo M.C."/>
            <person name="Fitzpatrick D.A."/>
            <person name="de Groot P.W.J."/>
            <person name="Harris D."/>
            <person name="Hoyer L.L."/>
            <person name="Hube B."/>
            <person name="Klis F.M."/>
            <person name="Kodira C."/>
            <person name="Lennard N."/>
            <person name="Logue M.E."/>
            <person name="Martin R."/>
            <person name="Neiman A.M."/>
            <person name="Nikolaou E."/>
            <person name="Quail M.A."/>
            <person name="Quinn J."/>
            <person name="Santos M.C."/>
            <person name="Schmitzberger F.F."/>
            <person name="Sherlock G."/>
            <person name="Shah P."/>
            <person name="Silverstein K.A.T."/>
            <person name="Skrzypek M.S."/>
            <person name="Soll D."/>
            <person name="Staggs R."/>
            <person name="Stansfield I."/>
            <person name="Stumpf M.P.H."/>
            <person name="Sudbery P.E."/>
            <person name="Srikantha T."/>
            <person name="Zeng Q."/>
            <person name="Berman J."/>
            <person name="Berriman M."/>
            <person name="Heitman J."/>
            <person name="Gow N.A.R."/>
            <person name="Lorenz M.C."/>
            <person name="Birren B.W."/>
            <person name="Kellis M."/>
            <person name="Cuomo C.A."/>
        </authorList>
    </citation>
    <scope>NUCLEOTIDE SEQUENCE [LARGE SCALE GENOMIC DNA]</scope>
    <source>
        <strain>ATCC 11503 / BCRC 21390 / CBS 2605 / JCM 1781 / NBRC 1676 / NRRL YB-4239</strain>
    </source>
</reference>
<keyword id="KW-0067">ATP-binding</keyword>
<keyword id="KW-0347">Helicase</keyword>
<keyword id="KW-0378">Hydrolase</keyword>
<keyword id="KW-0507">mRNA processing</keyword>
<keyword id="KW-0508">mRNA splicing</keyword>
<keyword id="KW-0509">mRNA transport</keyword>
<keyword id="KW-0547">Nucleotide-binding</keyword>
<keyword id="KW-0539">Nucleus</keyword>
<keyword id="KW-1185">Reference proteome</keyword>
<keyword id="KW-0694">RNA-binding</keyword>
<keyword id="KW-0747">Spliceosome</keyword>
<keyword id="KW-0813">Transport</keyword>
<organism>
    <name type="scientific">Lodderomyces elongisporus (strain ATCC 11503 / CBS 2605 / JCM 1781 / NBRC 1676 / NRRL YB-4239)</name>
    <name type="common">Yeast</name>
    <name type="synonym">Saccharomyces elongisporus</name>
    <dbReference type="NCBI Taxonomy" id="379508"/>
    <lineage>
        <taxon>Eukaryota</taxon>
        <taxon>Fungi</taxon>
        <taxon>Dikarya</taxon>
        <taxon>Ascomycota</taxon>
        <taxon>Saccharomycotina</taxon>
        <taxon>Pichiomycetes</taxon>
        <taxon>Debaryomycetaceae</taxon>
        <taxon>Candida/Lodderomyces clade</taxon>
        <taxon>Lodderomyces</taxon>
    </lineage>
</organism>
<name>SUB2_LODEL</name>